<organism>
    <name type="scientific">Ureaplasma parvum serovar 3 (strain ATCC 27815 / 27 / NCTC 11736)</name>
    <dbReference type="NCBI Taxonomy" id="505682"/>
    <lineage>
        <taxon>Bacteria</taxon>
        <taxon>Bacillati</taxon>
        <taxon>Mycoplasmatota</taxon>
        <taxon>Mycoplasmoidales</taxon>
        <taxon>Mycoplasmoidaceae</taxon>
        <taxon>Ureaplasma</taxon>
    </lineage>
</organism>
<proteinExistence type="inferred from homology"/>
<name>DNAK_UREP2</name>
<accession>B1AIX8</accession>
<dbReference type="EMBL" id="CP000942">
    <property type="protein sequence ID" value="ACA32773.1"/>
    <property type="molecule type" value="Genomic_DNA"/>
</dbReference>
<dbReference type="RefSeq" id="WP_006688469.1">
    <property type="nucleotide sequence ID" value="NC_010503.1"/>
</dbReference>
<dbReference type="SMR" id="B1AIX8"/>
<dbReference type="GeneID" id="29672518"/>
<dbReference type="KEGG" id="upa:UPA3_0355"/>
<dbReference type="HOGENOM" id="CLU_005965_2_4_14"/>
<dbReference type="Proteomes" id="UP000002162">
    <property type="component" value="Chromosome"/>
</dbReference>
<dbReference type="GO" id="GO:0005524">
    <property type="term" value="F:ATP binding"/>
    <property type="evidence" value="ECO:0007669"/>
    <property type="project" value="UniProtKB-UniRule"/>
</dbReference>
<dbReference type="GO" id="GO:0140662">
    <property type="term" value="F:ATP-dependent protein folding chaperone"/>
    <property type="evidence" value="ECO:0007669"/>
    <property type="project" value="InterPro"/>
</dbReference>
<dbReference type="GO" id="GO:0051082">
    <property type="term" value="F:unfolded protein binding"/>
    <property type="evidence" value="ECO:0007669"/>
    <property type="project" value="InterPro"/>
</dbReference>
<dbReference type="CDD" id="cd10234">
    <property type="entry name" value="ASKHA_NBD_HSP70_DnaK-like"/>
    <property type="match status" value="1"/>
</dbReference>
<dbReference type="FunFam" id="2.60.34.10:FF:000014">
    <property type="entry name" value="Chaperone protein DnaK HSP70"/>
    <property type="match status" value="1"/>
</dbReference>
<dbReference type="FunFam" id="3.30.420.40:FF:000071">
    <property type="entry name" value="Molecular chaperone DnaK"/>
    <property type="match status" value="1"/>
</dbReference>
<dbReference type="FunFam" id="3.90.640.10:FF:000003">
    <property type="entry name" value="Molecular chaperone DnaK"/>
    <property type="match status" value="1"/>
</dbReference>
<dbReference type="Gene3D" id="3.30.420.40">
    <property type="match status" value="2"/>
</dbReference>
<dbReference type="Gene3D" id="3.90.640.10">
    <property type="entry name" value="Actin, Chain A, domain 4"/>
    <property type="match status" value="1"/>
</dbReference>
<dbReference type="Gene3D" id="2.60.34.10">
    <property type="entry name" value="Substrate Binding Domain Of DNAk, Chain A, domain 1"/>
    <property type="match status" value="1"/>
</dbReference>
<dbReference type="HAMAP" id="MF_00332">
    <property type="entry name" value="DnaK"/>
    <property type="match status" value="1"/>
</dbReference>
<dbReference type="InterPro" id="IPR043129">
    <property type="entry name" value="ATPase_NBD"/>
</dbReference>
<dbReference type="InterPro" id="IPR012725">
    <property type="entry name" value="Chaperone_DnaK"/>
</dbReference>
<dbReference type="InterPro" id="IPR018181">
    <property type="entry name" value="Heat_shock_70_CS"/>
</dbReference>
<dbReference type="InterPro" id="IPR029047">
    <property type="entry name" value="HSP70_peptide-bd_sf"/>
</dbReference>
<dbReference type="InterPro" id="IPR013126">
    <property type="entry name" value="Hsp_70_fam"/>
</dbReference>
<dbReference type="NCBIfam" id="NF001413">
    <property type="entry name" value="PRK00290.1"/>
    <property type="match status" value="1"/>
</dbReference>
<dbReference type="NCBIfam" id="TIGR02350">
    <property type="entry name" value="prok_dnaK"/>
    <property type="match status" value="1"/>
</dbReference>
<dbReference type="PANTHER" id="PTHR19375">
    <property type="entry name" value="HEAT SHOCK PROTEIN 70KDA"/>
    <property type="match status" value="1"/>
</dbReference>
<dbReference type="Pfam" id="PF00012">
    <property type="entry name" value="HSP70"/>
    <property type="match status" value="1"/>
</dbReference>
<dbReference type="PRINTS" id="PR00301">
    <property type="entry name" value="HEATSHOCK70"/>
</dbReference>
<dbReference type="SUPFAM" id="SSF53067">
    <property type="entry name" value="Actin-like ATPase domain"/>
    <property type="match status" value="2"/>
</dbReference>
<dbReference type="SUPFAM" id="SSF100920">
    <property type="entry name" value="Heat shock protein 70kD (HSP70), peptide-binding domain"/>
    <property type="match status" value="1"/>
</dbReference>
<dbReference type="PROSITE" id="PS00297">
    <property type="entry name" value="HSP70_1"/>
    <property type="match status" value="1"/>
</dbReference>
<dbReference type="PROSITE" id="PS00329">
    <property type="entry name" value="HSP70_2"/>
    <property type="match status" value="1"/>
</dbReference>
<sequence>MAKEIILGIDLGTTNSCVAVIENKKPIVLENPEGKRTVPSVVSFNGDEVLVGDAAKRKQITNPNTISSIKRLMGTKEKVTVLNKDYTPEEISAKILTYIKEYAEKKIGAKVNKAVITVPAYFDDAQRQATKNAGIIAGLSVERIINEPTAAALAYGIDKLDKEQKILVFDLGGGTFDVSVLDMADGTFEVLSTSGDNHLGGDDWDQVIINWLLKSIADEFNIDLSKNKMAMQRLKDAAEKAKIELSGINTTTISLPFIAMDSSGQPINFEKELNRATFDNLTKNLIERLKKPVLDAMKESKLSLVDIDQVLMVGGSTRMPAVQNLVKELTGKEPNHSLNPDEVVAIGAAIQGGVLAGEIDDILLLDVTPLTLSIETMGGVATPLIPRNTKIPVSKSQIFSTAADNQPSVDIRIVQGERSLAADNKLLGNFELSGIEPAPRGVPQIEIKFNIDANGIMSVNAKDLKTQKETSITIKDSQGLSQDEIDKMIKEAEENKEKDAKVKHERELVNRADSLINQLEQVSKTENVPQEQKDVFNKQIEDLTNARDAQDYVKLEAEVKKVEDLLTNAAKFAQQAQQQNPDNQNNNKDDVTEATVTDDSTKK</sequence>
<evidence type="ECO:0000255" key="1">
    <source>
        <dbReference type="HAMAP-Rule" id="MF_00332"/>
    </source>
</evidence>
<evidence type="ECO:0000256" key="2">
    <source>
        <dbReference type="SAM" id="MobiDB-lite"/>
    </source>
</evidence>
<comment type="function">
    <text evidence="1">Acts as a chaperone.</text>
</comment>
<comment type="induction">
    <text evidence="1">By stress conditions e.g. heat shock.</text>
</comment>
<comment type="similarity">
    <text evidence="1">Belongs to the heat shock protein 70 family.</text>
</comment>
<feature type="chain" id="PRO_1000079253" description="Chaperone protein DnaK">
    <location>
        <begin position="1"/>
        <end position="603"/>
    </location>
</feature>
<feature type="region of interest" description="Disordered" evidence="2">
    <location>
        <begin position="573"/>
        <end position="603"/>
    </location>
</feature>
<feature type="compositionally biased region" description="Low complexity" evidence="2">
    <location>
        <begin position="573"/>
        <end position="586"/>
    </location>
</feature>
<feature type="compositionally biased region" description="Polar residues" evidence="2">
    <location>
        <begin position="594"/>
        <end position="603"/>
    </location>
</feature>
<feature type="modified residue" description="Phosphothreonine; by autocatalysis" evidence="1">
    <location>
        <position position="175"/>
    </location>
</feature>
<keyword id="KW-0067">ATP-binding</keyword>
<keyword id="KW-0143">Chaperone</keyword>
<keyword id="KW-0547">Nucleotide-binding</keyword>
<keyword id="KW-0597">Phosphoprotein</keyword>
<keyword id="KW-0346">Stress response</keyword>
<reference key="1">
    <citation type="submission" date="2008-02" db="EMBL/GenBank/DDBJ databases">
        <title>Genome sequence of Ureaplasma parvum serovar 3.</title>
        <authorList>
            <person name="Methe B.A."/>
            <person name="Glass J."/>
            <person name="Waites K."/>
            <person name="Shrivastava S."/>
        </authorList>
    </citation>
    <scope>NUCLEOTIDE SEQUENCE [LARGE SCALE GENOMIC DNA]</scope>
    <source>
        <strain>ATCC 27815 / 27 / NCTC 11736</strain>
    </source>
</reference>
<protein>
    <recommendedName>
        <fullName evidence="1">Chaperone protein DnaK</fullName>
    </recommendedName>
    <alternativeName>
        <fullName evidence="1">HSP70</fullName>
    </alternativeName>
    <alternativeName>
        <fullName evidence="1">Heat shock 70 kDa protein</fullName>
    </alternativeName>
    <alternativeName>
        <fullName evidence="1">Heat shock protein 70</fullName>
    </alternativeName>
</protein>
<gene>
    <name evidence="1" type="primary">dnaK</name>
    <name type="ordered locus">UPA3_0355</name>
</gene>